<proteinExistence type="inferred from homology"/>
<dbReference type="EC" id="7.1.1.-"/>
<dbReference type="EMBL" id="AE016826">
    <property type="protein sequence ID" value="AAO26880.1"/>
    <property type="molecule type" value="Genomic_DNA"/>
</dbReference>
<dbReference type="RefSeq" id="WP_011091281.1">
    <property type="nucleotide sequence ID" value="NC_004545.1"/>
</dbReference>
<dbReference type="SMR" id="Q89AU3"/>
<dbReference type="STRING" id="224915.bbp_146"/>
<dbReference type="KEGG" id="bab:bbp_146"/>
<dbReference type="eggNOG" id="COG1905">
    <property type="taxonomic scope" value="Bacteria"/>
</dbReference>
<dbReference type="HOGENOM" id="CLU_054362_2_0_6"/>
<dbReference type="OrthoDB" id="9807941at2"/>
<dbReference type="Proteomes" id="UP000000601">
    <property type="component" value="Chromosome"/>
</dbReference>
<dbReference type="GO" id="GO:0051537">
    <property type="term" value="F:2 iron, 2 sulfur cluster binding"/>
    <property type="evidence" value="ECO:0007669"/>
    <property type="project" value="UniProtKB-KW"/>
</dbReference>
<dbReference type="GO" id="GO:0046872">
    <property type="term" value="F:metal ion binding"/>
    <property type="evidence" value="ECO:0007669"/>
    <property type="project" value="UniProtKB-KW"/>
</dbReference>
<dbReference type="GO" id="GO:0003954">
    <property type="term" value="F:NADH dehydrogenase activity"/>
    <property type="evidence" value="ECO:0007669"/>
    <property type="project" value="TreeGrafter"/>
</dbReference>
<dbReference type="GO" id="GO:0048038">
    <property type="term" value="F:quinone binding"/>
    <property type="evidence" value="ECO:0007669"/>
    <property type="project" value="UniProtKB-KW"/>
</dbReference>
<dbReference type="CDD" id="cd03064">
    <property type="entry name" value="TRX_Fd_NuoE"/>
    <property type="match status" value="1"/>
</dbReference>
<dbReference type="FunFam" id="3.40.30.10:FF:000015">
    <property type="entry name" value="NADH-quinone oxidoreductase subunit E"/>
    <property type="match status" value="1"/>
</dbReference>
<dbReference type="Gene3D" id="3.40.30.10">
    <property type="entry name" value="Glutaredoxin"/>
    <property type="match status" value="1"/>
</dbReference>
<dbReference type="Gene3D" id="1.10.10.1590">
    <property type="entry name" value="NADH-quinone oxidoreductase subunit E"/>
    <property type="match status" value="1"/>
</dbReference>
<dbReference type="InterPro" id="IPR002023">
    <property type="entry name" value="NuoE-like"/>
</dbReference>
<dbReference type="InterPro" id="IPR042128">
    <property type="entry name" value="NuoE_dom"/>
</dbReference>
<dbReference type="InterPro" id="IPR041921">
    <property type="entry name" value="NuoE_N"/>
</dbReference>
<dbReference type="InterPro" id="IPR036249">
    <property type="entry name" value="Thioredoxin-like_sf"/>
</dbReference>
<dbReference type="NCBIfam" id="TIGR01958">
    <property type="entry name" value="nuoE_fam"/>
    <property type="match status" value="1"/>
</dbReference>
<dbReference type="NCBIfam" id="NF005722">
    <property type="entry name" value="PRK07539.1-2"/>
    <property type="match status" value="1"/>
</dbReference>
<dbReference type="PANTHER" id="PTHR10371:SF3">
    <property type="entry name" value="NADH DEHYDROGENASE [UBIQUINONE] FLAVOPROTEIN 2, MITOCHONDRIAL"/>
    <property type="match status" value="1"/>
</dbReference>
<dbReference type="PANTHER" id="PTHR10371">
    <property type="entry name" value="NADH DEHYDROGENASE UBIQUINONE FLAVOPROTEIN 2, MITOCHONDRIAL"/>
    <property type="match status" value="1"/>
</dbReference>
<dbReference type="Pfam" id="PF01257">
    <property type="entry name" value="2Fe-2S_thioredx"/>
    <property type="match status" value="1"/>
</dbReference>
<dbReference type="PIRSF" id="PIRSF000216">
    <property type="entry name" value="NADH_DH_24kDa"/>
    <property type="match status" value="1"/>
</dbReference>
<dbReference type="SUPFAM" id="SSF52833">
    <property type="entry name" value="Thioredoxin-like"/>
    <property type="match status" value="1"/>
</dbReference>
<gene>
    <name type="primary">nuoE</name>
    <name type="ordered locus">bbp_146</name>
</gene>
<organism>
    <name type="scientific">Buchnera aphidicola subsp. Baizongia pistaciae (strain Bp)</name>
    <dbReference type="NCBI Taxonomy" id="224915"/>
    <lineage>
        <taxon>Bacteria</taxon>
        <taxon>Pseudomonadati</taxon>
        <taxon>Pseudomonadota</taxon>
        <taxon>Gammaproteobacteria</taxon>
        <taxon>Enterobacterales</taxon>
        <taxon>Erwiniaceae</taxon>
        <taxon>Buchnera</taxon>
    </lineage>
</organism>
<keyword id="KW-0001">2Fe-2S</keyword>
<keyword id="KW-0408">Iron</keyword>
<keyword id="KW-0411">Iron-sulfur</keyword>
<keyword id="KW-0479">Metal-binding</keyword>
<keyword id="KW-0520">NAD</keyword>
<keyword id="KW-0874">Quinone</keyword>
<keyword id="KW-1185">Reference proteome</keyword>
<keyword id="KW-1278">Translocase</keyword>
<name>NUOE_BUCBP</name>
<accession>Q89AU3</accession>
<evidence type="ECO:0000250" key="1"/>
<evidence type="ECO:0000255" key="2"/>
<evidence type="ECO:0000305" key="3"/>
<sequence>MLTVEVYEMSKKIDIKFKLTIQEKIEIFNIIKNYRTVRSSLIEILKFVQKSYGWISNELITELACILKISKCDIEEIATFYSQIFRQPIGRNIIKYCDSVVCYVNGCEKIRCSLEKNLNVNVGETTKDFKFTLLPICCLGNCDKSPTIMINDDLYSNVTEYSVIVLLESYQ</sequence>
<reference key="1">
    <citation type="journal article" date="2003" name="Proc. Natl. Acad. Sci. U.S.A.">
        <title>Reductive genome evolution in Buchnera aphidicola.</title>
        <authorList>
            <person name="van Ham R.C.H.J."/>
            <person name="Kamerbeek J."/>
            <person name="Palacios C."/>
            <person name="Rausell C."/>
            <person name="Abascal F."/>
            <person name="Bastolla U."/>
            <person name="Fernandez J.M."/>
            <person name="Jimenez L."/>
            <person name="Postigo M."/>
            <person name="Silva F.J."/>
            <person name="Tamames J."/>
            <person name="Viguera E."/>
            <person name="Latorre A."/>
            <person name="Valencia A."/>
            <person name="Moran F."/>
            <person name="Moya A."/>
        </authorList>
    </citation>
    <scope>NUCLEOTIDE SEQUENCE [LARGE SCALE GENOMIC DNA]</scope>
    <source>
        <strain>Bp</strain>
    </source>
</reference>
<feature type="chain" id="PRO_0000118690" description="NADH-quinone oxidoreductase subunit E">
    <location>
        <begin position="1"/>
        <end position="171"/>
    </location>
</feature>
<feature type="binding site" evidence="2">
    <location>
        <position position="97"/>
    </location>
    <ligand>
        <name>[2Fe-2S] cluster</name>
        <dbReference type="ChEBI" id="CHEBI:190135"/>
    </ligand>
</feature>
<feature type="binding site" evidence="2">
    <location>
        <position position="102"/>
    </location>
    <ligand>
        <name>[2Fe-2S] cluster</name>
        <dbReference type="ChEBI" id="CHEBI:190135"/>
    </ligand>
</feature>
<feature type="binding site" evidence="2">
    <location>
        <position position="138"/>
    </location>
    <ligand>
        <name>[2Fe-2S] cluster</name>
        <dbReference type="ChEBI" id="CHEBI:190135"/>
    </ligand>
</feature>
<feature type="binding site" evidence="2">
    <location>
        <position position="142"/>
    </location>
    <ligand>
        <name>[2Fe-2S] cluster</name>
        <dbReference type="ChEBI" id="CHEBI:190135"/>
    </ligand>
</feature>
<protein>
    <recommendedName>
        <fullName>NADH-quinone oxidoreductase subunit E</fullName>
        <ecNumber>7.1.1.-</ecNumber>
    </recommendedName>
    <alternativeName>
        <fullName>NADH dehydrogenase I subunit E</fullName>
    </alternativeName>
    <alternativeName>
        <fullName>NDH-1 subunit E</fullName>
    </alternativeName>
</protein>
<comment type="function">
    <text evidence="1">NDH-1 shuttles electrons from NADH, via FMN and iron-sulfur (Fe-S) centers, to quinones in the respiratory chain. Couples the redox reaction to proton translocation (for every two electrons transferred, four hydrogen ions are translocated across the cytoplasmic membrane), and thus conserves the redox energy in a proton gradient (By similarity).</text>
</comment>
<comment type="catalytic activity">
    <reaction>
        <text>a quinone + NADH + 5 H(+)(in) = a quinol + NAD(+) + 4 H(+)(out)</text>
        <dbReference type="Rhea" id="RHEA:57888"/>
        <dbReference type="ChEBI" id="CHEBI:15378"/>
        <dbReference type="ChEBI" id="CHEBI:24646"/>
        <dbReference type="ChEBI" id="CHEBI:57540"/>
        <dbReference type="ChEBI" id="CHEBI:57945"/>
        <dbReference type="ChEBI" id="CHEBI:132124"/>
    </reaction>
</comment>
<comment type="cofactor">
    <cofactor evidence="3">
        <name>[2Fe-2S] cluster</name>
        <dbReference type="ChEBI" id="CHEBI:190135"/>
    </cofactor>
    <text evidence="3">Binds 1 [2Fe-2S] cluster.</text>
</comment>
<comment type="subunit">
    <text evidence="1">Composed of 13 different subunits. Subunits NuoCD, E, F, and G constitute the peripheral sector of the complex (By similarity).</text>
</comment>
<comment type="similarity">
    <text evidence="3">Belongs to the complex I 24 kDa subunit family.</text>
</comment>